<proteinExistence type="evidence at protein level"/>
<gene>
    <name type="primary">mgrA</name>
    <name type="synonym">norR</name>
    <name type="synonym">rat</name>
    <name type="ordered locus">SAOUHSC_00694</name>
</gene>
<sequence>MSDQHNLKEQLCFSLYNAQRQVNRYYSNKVFKKYNLTYPQFLVLTILWDESPVNVKKVVTELALDTGTVSPLLKRMEQVDLIKRERSEVDQREVFIHLTDKSETIRPELSNASDKVASASSLSQDEVKELNRLLGKVIHAFDETKEK</sequence>
<organism>
    <name type="scientific">Staphylococcus aureus (strain NCTC 8325 / PS 47)</name>
    <dbReference type="NCBI Taxonomy" id="93061"/>
    <lineage>
        <taxon>Bacteria</taxon>
        <taxon>Bacillati</taxon>
        <taxon>Bacillota</taxon>
        <taxon>Bacilli</taxon>
        <taxon>Bacillales</taxon>
        <taxon>Staphylococcaceae</taxon>
        <taxon>Staphylococcus</taxon>
    </lineage>
</organism>
<protein>
    <recommendedName>
        <fullName>HTH-type transcriptional regulator MgrA</fullName>
    </recommendedName>
    <alternativeName>
        <fullName>Regulator of autolytic activity</fullName>
    </alternativeName>
</protein>
<dbReference type="EMBL" id="AY266422">
    <property type="protein sequence ID" value="AAP24056.1"/>
    <property type="molecule type" value="Genomic_DNA"/>
</dbReference>
<dbReference type="EMBL" id="CP000253">
    <property type="protein sequence ID" value="ABD29827.1"/>
    <property type="molecule type" value="Genomic_DNA"/>
</dbReference>
<dbReference type="RefSeq" id="WP_001283444.1">
    <property type="nucleotide sequence ID" value="NZ_LS483365.1"/>
</dbReference>
<dbReference type="RefSeq" id="YP_499253.1">
    <property type="nucleotide sequence ID" value="NC_007795.1"/>
</dbReference>
<dbReference type="SMR" id="Q2G0B1"/>
<dbReference type="STRING" id="93061.SAOUHSC_00694"/>
<dbReference type="PaxDb" id="1280-SAXN108_0755"/>
<dbReference type="GeneID" id="3920998"/>
<dbReference type="GeneID" id="98345028"/>
<dbReference type="KEGG" id="sao:SAOUHSC_00694"/>
<dbReference type="PATRIC" id="fig|93061.5.peg.624"/>
<dbReference type="eggNOG" id="COG1846">
    <property type="taxonomic scope" value="Bacteria"/>
</dbReference>
<dbReference type="HOGENOM" id="CLU_083287_3_2_9"/>
<dbReference type="OrthoDB" id="9806864at2"/>
<dbReference type="PRO" id="PR:Q2G0B1"/>
<dbReference type="Proteomes" id="UP000008816">
    <property type="component" value="Chromosome"/>
</dbReference>
<dbReference type="GO" id="GO:0005737">
    <property type="term" value="C:cytoplasm"/>
    <property type="evidence" value="ECO:0007669"/>
    <property type="project" value="UniProtKB-SubCell"/>
</dbReference>
<dbReference type="GO" id="GO:0003677">
    <property type="term" value="F:DNA binding"/>
    <property type="evidence" value="ECO:0007669"/>
    <property type="project" value="UniProtKB-KW"/>
</dbReference>
<dbReference type="GO" id="GO:0003700">
    <property type="term" value="F:DNA-binding transcription factor activity"/>
    <property type="evidence" value="ECO:0007669"/>
    <property type="project" value="InterPro"/>
</dbReference>
<dbReference type="GO" id="GO:0006355">
    <property type="term" value="P:regulation of DNA-templated transcription"/>
    <property type="evidence" value="ECO:0000318"/>
    <property type="project" value="GO_Central"/>
</dbReference>
<dbReference type="GO" id="GO:0006950">
    <property type="term" value="P:response to stress"/>
    <property type="evidence" value="ECO:0000318"/>
    <property type="project" value="GO_Central"/>
</dbReference>
<dbReference type="FunFam" id="1.10.10.10:FF:000163">
    <property type="entry name" value="MarR family transcriptional regulator"/>
    <property type="match status" value="1"/>
</dbReference>
<dbReference type="Gene3D" id="1.10.10.10">
    <property type="entry name" value="Winged helix-like DNA-binding domain superfamily/Winged helix DNA-binding domain"/>
    <property type="match status" value="1"/>
</dbReference>
<dbReference type="InterPro" id="IPR000835">
    <property type="entry name" value="HTH_MarR-typ"/>
</dbReference>
<dbReference type="InterPro" id="IPR039422">
    <property type="entry name" value="MarR/SlyA-like"/>
</dbReference>
<dbReference type="InterPro" id="IPR055166">
    <property type="entry name" value="Transc_reg_Sar_Rot_HTH"/>
</dbReference>
<dbReference type="InterPro" id="IPR023187">
    <property type="entry name" value="Tscrpt_reg_MarR-type_CS"/>
</dbReference>
<dbReference type="InterPro" id="IPR036388">
    <property type="entry name" value="WH-like_DNA-bd_sf"/>
</dbReference>
<dbReference type="InterPro" id="IPR036390">
    <property type="entry name" value="WH_DNA-bd_sf"/>
</dbReference>
<dbReference type="PANTHER" id="PTHR33164:SF5">
    <property type="entry name" value="ORGANIC HYDROPEROXIDE RESISTANCE TRANSCRIPTIONAL REGULATOR"/>
    <property type="match status" value="1"/>
</dbReference>
<dbReference type="PANTHER" id="PTHR33164">
    <property type="entry name" value="TRANSCRIPTIONAL REGULATOR, MARR FAMILY"/>
    <property type="match status" value="1"/>
</dbReference>
<dbReference type="Pfam" id="PF22381">
    <property type="entry name" value="Staph_reg_Sar_Rot"/>
    <property type="match status" value="1"/>
</dbReference>
<dbReference type="SMART" id="SM00347">
    <property type="entry name" value="HTH_MARR"/>
    <property type="match status" value="1"/>
</dbReference>
<dbReference type="SUPFAM" id="SSF46785">
    <property type="entry name" value="Winged helix' DNA-binding domain"/>
    <property type="match status" value="1"/>
</dbReference>
<dbReference type="PROSITE" id="PS01117">
    <property type="entry name" value="HTH_MARR_1"/>
    <property type="match status" value="1"/>
</dbReference>
<dbReference type="PROSITE" id="PS50995">
    <property type="entry name" value="HTH_MARR_2"/>
    <property type="match status" value="1"/>
</dbReference>
<name>MGRA_STAA8</name>
<feature type="initiator methionine" description="Removed" evidence="2">
    <location>
        <position position="1"/>
    </location>
</feature>
<feature type="chain" id="PRO_0000247940" description="HTH-type transcriptional regulator MgrA">
    <location>
        <begin position="2"/>
        <end position="147"/>
    </location>
</feature>
<feature type="domain" description="HTH marR-type" evidence="1">
    <location>
        <begin position="8"/>
        <end position="139"/>
    </location>
</feature>
<feature type="DNA-binding region" description="H-T-H motif" evidence="1">
    <location>
        <begin position="55"/>
        <end position="78"/>
    </location>
</feature>
<reference key="1">
    <citation type="journal article" date="2003" name="J. Bacteriol.">
        <title>Characterization of NorR protein, a multifunctional regulator of norA expression in Staphylococcus aureus.</title>
        <authorList>
            <person name="Truong-Bolduc Q.C."/>
            <person name="Zhang X."/>
            <person name="Hooper D.C."/>
        </authorList>
    </citation>
    <scope>NUCLEOTIDE SEQUENCE [GENOMIC DNA]</scope>
    <scope>PROTEIN SEQUENCE OF 2-15</scope>
    <scope>FUNCTION</scope>
</reference>
<reference key="2">
    <citation type="book" date="2006" name="Gram positive pathogens, 2nd edition">
        <title>The Staphylococcus aureus NCTC 8325 genome.</title>
        <editorList>
            <person name="Fischetti V."/>
            <person name="Novick R."/>
            <person name="Ferretti J."/>
            <person name="Portnoy D."/>
            <person name="Rood J."/>
        </editorList>
        <authorList>
            <person name="Gillaspy A.F."/>
            <person name="Worrell V."/>
            <person name="Orvis J."/>
            <person name="Roe B.A."/>
            <person name="Dyer D.W."/>
            <person name="Iandolo J.J."/>
        </authorList>
    </citation>
    <scope>NUCLEOTIDE SEQUENCE [LARGE SCALE GENOMIC DNA]</scope>
    <source>
        <strain>NCTC 8325 / PS 47</strain>
    </source>
</reference>
<reference key="3">
    <citation type="journal article" date="2003" name="Mol. Microbiol.">
        <title>Characterization of RAT, an autolysis regulator in Staphylococcus aureus.</title>
        <authorList>
            <person name="Ingavale S.S."/>
            <person name="Van Wamel W."/>
            <person name="Cheung A.L."/>
        </authorList>
    </citation>
    <scope>FUNCTION</scope>
    <scope>REGULATION</scope>
</reference>
<reference key="4">
    <citation type="journal article" date="2004" name="J. Bacteriol.">
        <title>Identification of sarV (SA2062), a new transcriptional regulator, is repressed by SarA and MgrA (SA0641) and involved in the regulation of autolysis in Staphylococcus aureus.</title>
        <authorList>
            <person name="Manna A.C."/>
            <person name="Ingavale S.S."/>
            <person name="Maloney M."/>
            <person name="van Wamel W."/>
            <person name="Cheung A.L."/>
        </authorList>
    </citation>
    <scope>FUNCTION</scope>
</reference>
<reference key="5">
    <citation type="journal article" date="2005" name="Infect. Immun.">
        <title>Rat/MgrA, a regulator of autolysis, is a regulator of virulence genes in Staphylococcus aureus.</title>
        <authorList>
            <person name="Ingavale S.S."/>
            <person name="van Wamel W."/>
            <person name="Luong T.T."/>
            <person name="Lee C.Y."/>
            <person name="Cheung A.L."/>
        </authorList>
    </citation>
    <scope>FUNCTION</scope>
</reference>
<reference key="6">
    <citation type="journal article" date="2005" name="J. Bacteriol.">
        <title>MgrA is a multiple regulator of two new efflux pumps in Staphylococcus aureus.</title>
        <authorList>
            <person name="Truong-Bolduc Q.C."/>
            <person name="Dunman P.M."/>
            <person name="Strahilevitz J."/>
            <person name="Projan S.J."/>
            <person name="Hooper D.C."/>
        </authorList>
    </citation>
    <scope>FUNCTION</scope>
</reference>
<comment type="function">
    <text evidence="2 3 4 5 6">Regulatory protein involved in autolytic activity, multidrug resistance and virulence. Controls autolysis by inactivating LytM, LytN (autolysins) and SarV (autolysis activator) and activating ArlRS, LrgAB and LytSR (autolysis inhibitors). Acts as a dual regulator for resistance to multiple drugs by inactivating NorB and tet38 and activating NorA. Positively controls the expression of virulence accessory gene regulator (agr) to promote alpha-hemolysin (hla) transcription and down-regulates staphylococcal accessory regulator (sarS), leading to repression of surface protein A (spa). Binds directly to hla promoter to augment its activation. Binds to sarS promoter to down-regulate spa expression.</text>
</comment>
<comment type="subcellular location">
    <subcellularLocation>
        <location evidence="7">Cytoplasm</location>
    </subcellularLocation>
</comment>
<comment type="induction">
    <text>Autoregulated.</text>
</comment>
<keyword id="KW-0010">Activator</keyword>
<keyword id="KW-0963">Cytoplasm</keyword>
<keyword id="KW-0903">Direct protein sequencing</keyword>
<keyword id="KW-0238">DNA-binding</keyword>
<keyword id="KW-1185">Reference proteome</keyword>
<keyword id="KW-0678">Repressor</keyword>
<keyword id="KW-0804">Transcription</keyword>
<keyword id="KW-0805">Transcription regulation</keyword>
<keyword id="KW-0843">Virulence</keyword>
<evidence type="ECO:0000255" key="1">
    <source>
        <dbReference type="PROSITE-ProRule" id="PRU00345"/>
    </source>
</evidence>
<evidence type="ECO:0000269" key="2">
    <source>
    </source>
</evidence>
<evidence type="ECO:0000269" key="3">
    <source>
    </source>
</evidence>
<evidence type="ECO:0000269" key="4">
    <source>
    </source>
</evidence>
<evidence type="ECO:0000269" key="5">
    <source>
    </source>
</evidence>
<evidence type="ECO:0000269" key="6">
    <source>
    </source>
</evidence>
<evidence type="ECO:0000305" key="7"/>
<accession>Q2G0B1</accession>
<accession>Q7X448</accession>
<accession>Q83ZI4</accession>